<reference key="1">
    <citation type="journal article" date="2007" name="Nat. Biotechnol.">
        <title>Complete genome sequence of the myxobacterium Sorangium cellulosum.</title>
        <authorList>
            <person name="Schneiker S."/>
            <person name="Perlova O."/>
            <person name="Kaiser O."/>
            <person name="Gerth K."/>
            <person name="Alici A."/>
            <person name="Altmeyer M.O."/>
            <person name="Bartels D."/>
            <person name="Bekel T."/>
            <person name="Beyer S."/>
            <person name="Bode E."/>
            <person name="Bode H.B."/>
            <person name="Bolten C.J."/>
            <person name="Choudhuri J.V."/>
            <person name="Doss S."/>
            <person name="Elnakady Y.A."/>
            <person name="Frank B."/>
            <person name="Gaigalat L."/>
            <person name="Goesmann A."/>
            <person name="Groeger C."/>
            <person name="Gross F."/>
            <person name="Jelsbak L."/>
            <person name="Jelsbak L."/>
            <person name="Kalinowski J."/>
            <person name="Kegler C."/>
            <person name="Knauber T."/>
            <person name="Konietzny S."/>
            <person name="Kopp M."/>
            <person name="Krause L."/>
            <person name="Krug D."/>
            <person name="Linke B."/>
            <person name="Mahmud T."/>
            <person name="Martinez-Arias R."/>
            <person name="McHardy A.C."/>
            <person name="Merai M."/>
            <person name="Meyer F."/>
            <person name="Mormann S."/>
            <person name="Munoz-Dorado J."/>
            <person name="Perez J."/>
            <person name="Pradella S."/>
            <person name="Rachid S."/>
            <person name="Raddatz G."/>
            <person name="Rosenau F."/>
            <person name="Rueckert C."/>
            <person name="Sasse F."/>
            <person name="Scharfe M."/>
            <person name="Schuster S.C."/>
            <person name="Suen G."/>
            <person name="Treuner-Lange A."/>
            <person name="Velicer G.J."/>
            <person name="Vorholter F.-J."/>
            <person name="Weissman K.J."/>
            <person name="Welch R.D."/>
            <person name="Wenzel S.C."/>
            <person name="Whitworth D.E."/>
            <person name="Wilhelm S."/>
            <person name="Wittmann C."/>
            <person name="Bloecker H."/>
            <person name="Puehler A."/>
            <person name="Mueller R."/>
        </authorList>
    </citation>
    <scope>NUCLEOTIDE SEQUENCE [LARGE SCALE GENOMIC DNA]</scope>
    <source>
        <strain>So ce56</strain>
    </source>
</reference>
<gene>
    <name evidence="1" type="primary">argB</name>
    <name type="ordered locus">sce0342</name>
</gene>
<accession>A9GQU6</accession>
<sequence>MSQSSAEAPVTTATGPLVIKLGGEVVGGPALAILSSDLAALTRAGARAIVVHGGGAQATRLQERLGIPVRQVAGQRVTDADTLDVMKMVVAGKLNVDLCAALVAAGARPVGLHGASGPALSAVKRPPQVYAGAGPEPVDLGLVGDITGVDRGLLELLGSGGYLPVLACLGAGADGQAYNINADTVANRVAIELGAAGLFLVSDVPGVLRDVADPASRIPSLTVAEGRALIASGAVTRGMIPKLEESFAALAEGVRRIHILGRLKPGDLAREASEPGSIGTVLVP</sequence>
<protein>
    <recommendedName>
        <fullName evidence="1">Acetylglutamate kinase</fullName>
        <ecNumber evidence="1">2.7.2.8</ecNumber>
    </recommendedName>
    <alternativeName>
        <fullName evidence="1">N-acetyl-L-glutamate 5-phosphotransferase</fullName>
    </alternativeName>
    <alternativeName>
        <fullName evidence="1">NAG kinase</fullName>
        <shortName evidence="1">NAGK</shortName>
    </alternativeName>
</protein>
<keyword id="KW-0028">Amino-acid biosynthesis</keyword>
<keyword id="KW-0055">Arginine biosynthesis</keyword>
<keyword id="KW-0067">ATP-binding</keyword>
<keyword id="KW-0963">Cytoplasm</keyword>
<keyword id="KW-0418">Kinase</keyword>
<keyword id="KW-0547">Nucleotide-binding</keyword>
<keyword id="KW-1185">Reference proteome</keyword>
<keyword id="KW-0808">Transferase</keyword>
<organism>
    <name type="scientific">Sorangium cellulosum (strain So ce56)</name>
    <name type="common">Polyangium cellulosum (strain So ce56)</name>
    <dbReference type="NCBI Taxonomy" id="448385"/>
    <lineage>
        <taxon>Bacteria</taxon>
        <taxon>Pseudomonadati</taxon>
        <taxon>Myxococcota</taxon>
        <taxon>Polyangia</taxon>
        <taxon>Polyangiales</taxon>
        <taxon>Polyangiaceae</taxon>
        <taxon>Sorangium</taxon>
    </lineage>
</organism>
<evidence type="ECO:0000255" key="1">
    <source>
        <dbReference type="HAMAP-Rule" id="MF_00082"/>
    </source>
</evidence>
<proteinExistence type="inferred from homology"/>
<dbReference type="EC" id="2.7.2.8" evidence="1"/>
<dbReference type="EMBL" id="AM746676">
    <property type="protein sequence ID" value="CAN90499.1"/>
    <property type="molecule type" value="Genomic_DNA"/>
</dbReference>
<dbReference type="SMR" id="A9GQU6"/>
<dbReference type="STRING" id="448385.sce0342"/>
<dbReference type="KEGG" id="scl:sce0342"/>
<dbReference type="eggNOG" id="COG0548">
    <property type="taxonomic scope" value="Bacteria"/>
</dbReference>
<dbReference type="HOGENOM" id="CLU_053680_1_0_7"/>
<dbReference type="OrthoDB" id="9803155at2"/>
<dbReference type="BioCyc" id="SCEL448385:SCE_RS01790-MONOMER"/>
<dbReference type="UniPathway" id="UPA00068">
    <property type="reaction ID" value="UER00107"/>
</dbReference>
<dbReference type="Proteomes" id="UP000002139">
    <property type="component" value="Chromosome"/>
</dbReference>
<dbReference type="GO" id="GO:0005737">
    <property type="term" value="C:cytoplasm"/>
    <property type="evidence" value="ECO:0007669"/>
    <property type="project" value="UniProtKB-SubCell"/>
</dbReference>
<dbReference type="GO" id="GO:0003991">
    <property type="term" value="F:acetylglutamate kinase activity"/>
    <property type="evidence" value="ECO:0007669"/>
    <property type="project" value="UniProtKB-UniRule"/>
</dbReference>
<dbReference type="GO" id="GO:0005524">
    <property type="term" value="F:ATP binding"/>
    <property type="evidence" value="ECO:0007669"/>
    <property type="project" value="UniProtKB-UniRule"/>
</dbReference>
<dbReference type="GO" id="GO:0042450">
    <property type="term" value="P:arginine biosynthetic process via ornithine"/>
    <property type="evidence" value="ECO:0007669"/>
    <property type="project" value="UniProtKB-UniRule"/>
</dbReference>
<dbReference type="GO" id="GO:0006526">
    <property type="term" value="P:L-arginine biosynthetic process"/>
    <property type="evidence" value="ECO:0007669"/>
    <property type="project" value="UniProtKB-UniPathway"/>
</dbReference>
<dbReference type="CDD" id="cd04238">
    <property type="entry name" value="AAK_NAGK-like"/>
    <property type="match status" value="1"/>
</dbReference>
<dbReference type="Gene3D" id="3.40.1160.10">
    <property type="entry name" value="Acetylglutamate kinase-like"/>
    <property type="match status" value="1"/>
</dbReference>
<dbReference type="HAMAP" id="MF_00082">
    <property type="entry name" value="ArgB"/>
    <property type="match status" value="1"/>
</dbReference>
<dbReference type="InterPro" id="IPR036393">
    <property type="entry name" value="AceGlu_kinase-like_sf"/>
</dbReference>
<dbReference type="InterPro" id="IPR004662">
    <property type="entry name" value="AcgluKinase_fam"/>
</dbReference>
<dbReference type="InterPro" id="IPR037528">
    <property type="entry name" value="ArgB"/>
</dbReference>
<dbReference type="InterPro" id="IPR001048">
    <property type="entry name" value="Asp/Glu/Uridylate_kinase"/>
</dbReference>
<dbReference type="InterPro" id="IPR001057">
    <property type="entry name" value="Glu/AcGlu_kinase"/>
</dbReference>
<dbReference type="NCBIfam" id="TIGR00761">
    <property type="entry name" value="argB"/>
    <property type="match status" value="1"/>
</dbReference>
<dbReference type="PANTHER" id="PTHR23342">
    <property type="entry name" value="N-ACETYLGLUTAMATE SYNTHASE"/>
    <property type="match status" value="1"/>
</dbReference>
<dbReference type="PANTHER" id="PTHR23342:SF0">
    <property type="entry name" value="N-ACETYLGLUTAMATE SYNTHASE, MITOCHONDRIAL"/>
    <property type="match status" value="1"/>
</dbReference>
<dbReference type="Pfam" id="PF00696">
    <property type="entry name" value="AA_kinase"/>
    <property type="match status" value="1"/>
</dbReference>
<dbReference type="PIRSF" id="PIRSF000728">
    <property type="entry name" value="NAGK"/>
    <property type="match status" value="1"/>
</dbReference>
<dbReference type="PRINTS" id="PR00474">
    <property type="entry name" value="GLU5KINASE"/>
</dbReference>
<dbReference type="SUPFAM" id="SSF53633">
    <property type="entry name" value="Carbamate kinase-like"/>
    <property type="match status" value="1"/>
</dbReference>
<comment type="function">
    <text evidence="1">Catalyzes the ATP-dependent phosphorylation of N-acetyl-L-glutamate.</text>
</comment>
<comment type="catalytic activity">
    <reaction evidence="1">
        <text>N-acetyl-L-glutamate + ATP = N-acetyl-L-glutamyl 5-phosphate + ADP</text>
        <dbReference type="Rhea" id="RHEA:14629"/>
        <dbReference type="ChEBI" id="CHEBI:30616"/>
        <dbReference type="ChEBI" id="CHEBI:44337"/>
        <dbReference type="ChEBI" id="CHEBI:57936"/>
        <dbReference type="ChEBI" id="CHEBI:456216"/>
        <dbReference type="EC" id="2.7.2.8"/>
    </reaction>
</comment>
<comment type="pathway">
    <text evidence="1">Amino-acid biosynthesis; L-arginine biosynthesis; N(2)-acetyl-L-ornithine from L-glutamate: step 2/4.</text>
</comment>
<comment type="subcellular location">
    <subcellularLocation>
        <location evidence="1">Cytoplasm</location>
    </subcellularLocation>
</comment>
<comment type="similarity">
    <text evidence="1">Belongs to the acetylglutamate kinase family. ArgB subfamily.</text>
</comment>
<name>ARGB_SORC5</name>
<feature type="chain" id="PRO_0000335667" description="Acetylglutamate kinase">
    <location>
        <begin position="1"/>
        <end position="284"/>
    </location>
</feature>
<feature type="binding site" evidence="1">
    <location>
        <begin position="54"/>
        <end position="55"/>
    </location>
    <ligand>
        <name>substrate</name>
    </ligand>
</feature>
<feature type="binding site" evidence="1">
    <location>
        <position position="76"/>
    </location>
    <ligand>
        <name>substrate</name>
    </ligand>
</feature>
<feature type="binding site" evidence="1">
    <location>
        <position position="179"/>
    </location>
    <ligand>
        <name>substrate</name>
    </ligand>
</feature>
<feature type="site" description="Transition state stabilizer" evidence="1">
    <location>
        <position position="20"/>
    </location>
</feature>
<feature type="site" description="Transition state stabilizer" evidence="1">
    <location>
        <position position="242"/>
    </location>
</feature>